<protein>
    <recommendedName>
        <fullName evidence="1">3,4-dihydroxy-2-butanone 4-phosphate synthase</fullName>
        <shortName evidence="1">DHBP synthase</shortName>
        <ecNumber evidence="1">4.1.99.12</ecNumber>
    </recommendedName>
</protein>
<comment type="function">
    <text evidence="1">Catalyzes the conversion of D-ribulose 5-phosphate to formate and 3,4-dihydroxy-2-butanone 4-phosphate.</text>
</comment>
<comment type="catalytic activity">
    <reaction evidence="1">
        <text>D-ribulose 5-phosphate = (2S)-2-hydroxy-3-oxobutyl phosphate + formate + H(+)</text>
        <dbReference type="Rhea" id="RHEA:18457"/>
        <dbReference type="ChEBI" id="CHEBI:15378"/>
        <dbReference type="ChEBI" id="CHEBI:15740"/>
        <dbReference type="ChEBI" id="CHEBI:58121"/>
        <dbReference type="ChEBI" id="CHEBI:58830"/>
        <dbReference type="EC" id="4.1.99.12"/>
    </reaction>
</comment>
<comment type="cofactor">
    <cofactor evidence="1">
        <name>Mg(2+)</name>
        <dbReference type="ChEBI" id="CHEBI:18420"/>
    </cofactor>
    <cofactor evidence="1">
        <name>Mn(2+)</name>
        <dbReference type="ChEBI" id="CHEBI:29035"/>
    </cofactor>
    <text evidence="1">Binds 2 divalent metal cations per subunit. Magnesium or manganese.</text>
</comment>
<comment type="pathway">
    <text evidence="1">Cofactor biosynthesis; riboflavin biosynthesis; 2-hydroxy-3-oxobutyl phosphate from D-ribulose 5-phosphate: step 1/1.</text>
</comment>
<comment type="subunit">
    <text evidence="1">Homodimer.</text>
</comment>
<comment type="similarity">
    <text evidence="1">Belongs to the DHBP synthase family.</text>
</comment>
<reference key="1">
    <citation type="submission" date="2007-09" db="EMBL/GenBank/DDBJ databases">
        <title>Complete sequence of chromosome of Serratia proteamaculans 568.</title>
        <authorList>
            <consortium name="US DOE Joint Genome Institute"/>
            <person name="Copeland A."/>
            <person name="Lucas S."/>
            <person name="Lapidus A."/>
            <person name="Barry K."/>
            <person name="Glavina del Rio T."/>
            <person name="Dalin E."/>
            <person name="Tice H."/>
            <person name="Pitluck S."/>
            <person name="Chain P."/>
            <person name="Malfatti S."/>
            <person name="Shin M."/>
            <person name="Vergez L."/>
            <person name="Schmutz J."/>
            <person name="Larimer F."/>
            <person name="Land M."/>
            <person name="Hauser L."/>
            <person name="Kyrpides N."/>
            <person name="Kim E."/>
            <person name="Taghavi S."/>
            <person name="Newman L."/>
            <person name="Vangronsveld J."/>
            <person name="van der Lelie D."/>
            <person name="Richardson P."/>
        </authorList>
    </citation>
    <scope>NUCLEOTIDE SEQUENCE [LARGE SCALE GENOMIC DNA]</scope>
    <source>
        <strain>568</strain>
    </source>
</reference>
<dbReference type="EC" id="4.1.99.12" evidence="1"/>
<dbReference type="EMBL" id="CP000826">
    <property type="protein sequence ID" value="ABV43380.1"/>
    <property type="molecule type" value="Genomic_DNA"/>
</dbReference>
<dbReference type="SMR" id="A8GJU0"/>
<dbReference type="STRING" id="399741.Spro_4286"/>
<dbReference type="KEGG" id="spe:Spro_4286"/>
<dbReference type="eggNOG" id="COG0108">
    <property type="taxonomic scope" value="Bacteria"/>
</dbReference>
<dbReference type="HOGENOM" id="CLU_020273_3_0_6"/>
<dbReference type="OrthoDB" id="9793111at2"/>
<dbReference type="UniPathway" id="UPA00275">
    <property type="reaction ID" value="UER00399"/>
</dbReference>
<dbReference type="GO" id="GO:0005829">
    <property type="term" value="C:cytosol"/>
    <property type="evidence" value="ECO:0007669"/>
    <property type="project" value="TreeGrafter"/>
</dbReference>
<dbReference type="GO" id="GO:0008686">
    <property type="term" value="F:3,4-dihydroxy-2-butanone-4-phosphate synthase activity"/>
    <property type="evidence" value="ECO:0007669"/>
    <property type="project" value="UniProtKB-UniRule"/>
</dbReference>
<dbReference type="GO" id="GO:0000287">
    <property type="term" value="F:magnesium ion binding"/>
    <property type="evidence" value="ECO:0007669"/>
    <property type="project" value="UniProtKB-UniRule"/>
</dbReference>
<dbReference type="GO" id="GO:0030145">
    <property type="term" value="F:manganese ion binding"/>
    <property type="evidence" value="ECO:0007669"/>
    <property type="project" value="UniProtKB-UniRule"/>
</dbReference>
<dbReference type="GO" id="GO:0009231">
    <property type="term" value="P:riboflavin biosynthetic process"/>
    <property type="evidence" value="ECO:0007669"/>
    <property type="project" value="UniProtKB-UniRule"/>
</dbReference>
<dbReference type="FunFam" id="3.90.870.10:FF:000002">
    <property type="entry name" value="3,4-dihydroxy-2-butanone 4-phosphate synthase"/>
    <property type="match status" value="1"/>
</dbReference>
<dbReference type="Gene3D" id="3.90.870.10">
    <property type="entry name" value="DHBP synthase"/>
    <property type="match status" value="1"/>
</dbReference>
<dbReference type="HAMAP" id="MF_00180">
    <property type="entry name" value="RibB"/>
    <property type="match status" value="1"/>
</dbReference>
<dbReference type="InterPro" id="IPR017945">
    <property type="entry name" value="DHBP_synth_RibB-like_a/b_dom"/>
</dbReference>
<dbReference type="InterPro" id="IPR000422">
    <property type="entry name" value="DHBP_synthase_RibB"/>
</dbReference>
<dbReference type="NCBIfam" id="TIGR00506">
    <property type="entry name" value="ribB"/>
    <property type="match status" value="1"/>
</dbReference>
<dbReference type="PANTHER" id="PTHR21327:SF38">
    <property type="entry name" value="3,4-DIHYDROXY-2-BUTANONE 4-PHOSPHATE SYNTHASE"/>
    <property type="match status" value="1"/>
</dbReference>
<dbReference type="PANTHER" id="PTHR21327">
    <property type="entry name" value="GTP CYCLOHYDROLASE II-RELATED"/>
    <property type="match status" value="1"/>
</dbReference>
<dbReference type="Pfam" id="PF00926">
    <property type="entry name" value="DHBP_synthase"/>
    <property type="match status" value="1"/>
</dbReference>
<dbReference type="SUPFAM" id="SSF55821">
    <property type="entry name" value="YrdC/RibB"/>
    <property type="match status" value="1"/>
</dbReference>
<sequence length="217" mass="23623">MNQTLLSDFGTPVERVERALEALRNGRGVMVLDDENRENEGDMIFAAETMTVEQMALTIRHGSGIVCLCLTEERRQQLELPMMVTNNSSQFQTAFTVTIEAAQGVTTGVSASDRLTTIRAAVADNAKPSDLNRPGHVFPLRAQPGGVLSRRGHTEATIDLVSMAGFKPAGVLCELTNDDGSMAHAPEVILFAKQHDMTVLTIEDLVAYRQAHEQKAS</sequence>
<evidence type="ECO:0000255" key="1">
    <source>
        <dbReference type="HAMAP-Rule" id="MF_00180"/>
    </source>
</evidence>
<keyword id="KW-0456">Lyase</keyword>
<keyword id="KW-0460">Magnesium</keyword>
<keyword id="KW-0464">Manganese</keyword>
<keyword id="KW-0479">Metal-binding</keyword>
<keyword id="KW-0686">Riboflavin biosynthesis</keyword>
<proteinExistence type="inferred from homology"/>
<gene>
    <name evidence="1" type="primary">ribB</name>
    <name type="ordered locus">Spro_4286</name>
</gene>
<organism>
    <name type="scientific">Serratia proteamaculans (strain 568)</name>
    <dbReference type="NCBI Taxonomy" id="399741"/>
    <lineage>
        <taxon>Bacteria</taxon>
        <taxon>Pseudomonadati</taxon>
        <taxon>Pseudomonadota</taxon>
        <taxon>Gammaproteobacteria</taxon>
        <taxon>Enterobacterales</taxon>
        <taxon>Yersiniaceae</taxon>
        <taxon>Serratia</taxon>
    </lineage>
</organism>
<accession>A8GJU0</accession>
<feature type="chain" id="PRO_1000058381" description="3,4-dihydroxy-2-butanone 4-phosphate synthase">
    <location>
        <begin position="1"/>
        <end position="217"/>
    </location>
</feature>
<feature type="binding site" evidence="1">
    <location>
        <begin position="37"/>
        <end position="38"/>
    </location>
    <ligand>
        <name>D-ribulose 5-phosphate</name>
        <dbReference type="ChEBI" id="CHEBI:58121"/>
    </ligand>
</feature>
<feature type="binding site" evidence="1">
    <location>
        <position position="38"/>
    </location>
    <ligand>
        <name>Mg(2+)</name>
        <dbReference type="ChEBI" id="CHEBI:18420"/>
        <label>1</label>
    </ligand>
</feature>
<feature type="binding site" evidence="1">
    <location>
        <position position="38"/>
    </location>
    <ligand>
        <name>Mg(2+)</name>
        <dbReference type="ChEBI" id="CHEBI:18420"/>
        <label>2</label>
    </ligand>
</feature>
<feature type="binding site" evidence="1">
    <location>
        <position position="42"/>
    </location>
    <ligand>
        <name>D-ribulose 5-phosphate</name>
        <dbReference type="ChEBI" id="CHEBI:58121"/>
    </ligand>
</feature>
<feature type="binding site" evidence="1">
    <location>
        <begin position="150"/>
        <end position="154"/>
    </location>
    <ligand>
        <name>D-ribulose 5-phosphate</name>
        <dbReference type="ChEBI" id="CHEBI:58121"/>
    </ligand>
</feature>
<feature type="binding site" evidence="1">
    <location>
        <position position="153"/>
    </location>
    <ligand>
        <name>Mg(2+)</name>
        <dbReference type="ChEBI" id="CHEBI:18420"/>
        <label>2</label>
    </ligand>
</feature>
<feature type="binding site" evidence="1">
    <location>
        <position position="174"/>
    </location>
    <ligand>
        <name>D-ribulose 5-phosphate</name>
        <dbReference type="ChEBI" id="CHEBI:58121"/>
    </ligand>
</feature>
<feature type="site" description="Essential for catalytic activity" evidence="1">
    <location>
        <position position="136"/>
    </location>
</feature>
<feature type="site" description="Essential for catalytic activity" evidence="1">
    <location>
        <position position="174"/>
    </location>
</feature>
<name>RIBB_SERP5</name>